<proteinExistence type="inferred from homology"/>
<name>LYSZ_PYRNV</name>
<keyword id="KW-0028">Amino-acid biosynthesis</keyword>
<keyword id="KW-0055">Arginine biosynthesis</keyword>
<keyword id="KW-0067">ATP-binding</keyword>
<keyword id="KW-0963">Cytoplasm</keyword>
<keyword id="KW-0418">Kinase</keyword>
<keyword id="KW-0457">Lysine biosynthesis</keyword>
<keyword id="KW-0547">Nucleotide-binding</keyword>
<keyword id="KW-0808">Transferase</keyword>
<dbReference type="EC" id="2.7.2.17" evidence="1"/>
<dbReference type="EC" id="2.7.2.19" evidence="1"/>
<dbReference type="EMBL" id="CP001014">
    <property type="protein sequence ID" value="ACB40753.1"/>
    <property type="molecule type" value="Genomic_DNA"/>
</dbReference>
<dbReference type="RefSeq" id="WP_012351172.1">
    <property type="nucleotide sequence ID" value="NC_010525.1"/>
</dbReference>
<dbReference type="SMR" id="B1YB53"/>
<dbReference type="STRING" id="444157.Tneu_1836"/>
<dbReference type="GeneID" id="6164308"/>
<dbReference type="KEGG" id="tne:Tneu_1836"/>
<dbReference type="eggNOG" id="arCOG00862">
    <property type="taxonomic scope" value="Archaea"/>
</dbReference>
<dbReference type="HOGENOM" id="CLU_053680_2_0_2"/>
<dbReference type="OrthoDB" id="6816at2157"/>
<dbReference type="UniPathway" id="UPA00033">
    <property type="reaction ID" value="UER00036"/>
</dbReference>
<dbReference type="UniPathway" id="UPA00068"/>
<dbReference type="Proteomes" id="UP000001694">
    <property type="component" value="Chromosome"/>
</dbReference>
<dbReference type="GO" id="GO:0005737">
    <property type="term" value="C:cytoplasm"/>
    <property type="evidence" value="ECO:0007669"/>
    <property type="project" value="UniProtKB-SubCell"/>
</dbReference>
<dbReference type="GO" id="GO:0003991">
    <property type="term" value="F:acetylglutamate kinase activity"/>
    <property type="evidence" value="ECO:0007669"/>
    <property type="project" value="TreeGrafter"/>
</dbReference>
<dbReference type="GO" id="GO:0005524">
    <property type="term" value="F:ATP binding"/>
    <property type="evidence" value="ECO:0007669"/>
    <property type="project" value="UniProtKB-KW"/>
</dbReference>
<dbReference type="GO" id="GO:0043744">
    <property type="term" value="F:N2-acetyl-L-aminoadipate kinase activity"/>
    <property type="evidence" value="ECO:0007669"/>
    <property type="project" value="RHEA"/>
</dbReference>
<dbReference type="GO" id="GO:0042450">
    <property type="term" value="P:arginine biosynthetic process via ornithine"/>
    <property type="evidence" value="ECO:0007669"/>
    <property type="project" value="UniProtKB-UniRule"/>
</dbReference>
<dbReference type="GO" id="GO:0006526">
    <property type="term" value="P:L-arginine biosynthetic process"/>
    <property type="evidence" value="ECO:0007669"/>
    <property type="project" value="UniProtKB-UniPathway"/>
</dbReference>
<dbReference type="GO" id="GO:0019878">
    <property type="term" value="P:lysine biosynthetic process via aminoadipic acid"/>
    <property type="evidence" value="ECO:0007669"/>
    <property type="project" value="UniProtKB-UniRule"/>
</dbReference>
<dbReference type="CDD" id="cd04251">
    <property type="entry name" value="AAK_NAGK-UC"/>
    <property type="match status" value="1"/>
</dbReference>
<dbReference type="Gene3D" id="3.40.1160.10">
    <property type="entry name" value="Acetylglutamate kinase-like"/>
    <property type="match status" value="1"/>
</dbReference>
<dbReference type="HAMAP" id="MF_02082">
    <property type="entry name" value="LysZ"/>
    <property type="match status" value="1"/>
</dbReference>
<dbReference type="InterPro" id="IPR036393">
    <property type="entry name" value="AceGlu_kinase-like_sf"/>
</dbReference>
<dbReference type="InterPro" id="IPR004662">
    <property type="entry name" value="AcgluKinase_fam"/>
</dbReference>
<dbReference type="InterPro" id="IPR001048">
    <property type="entry name" value="Asp/Glu/Uridylate_kinase"/>
</dbReference>
<dbReference type="InterPro" id="IPR037529">
    <property type="entry name" value="LysZ"/>
</dbReference>
<dbReference type="NCBIfam" id="TIGR00761">
    <property type="entry name" value="argB"/>
    <property type="match status" value="1"/>
</dbReference>
<dbReference type="NCBIfam" id="NF010662">
    <property type="entry name" value="PRK14058.1-4"/>
    <property type="match status" value="1"/>
</dbReference>
<dbReference type="PANTHER" id="PTHR23342">
    <property type="entry name" value="N-ACETYLGLUTAMATE SYNTHASE"/>
    <property type="match status" value="1"/>
</dbReference>
<dbReference type="PANTHER" id="PTHR23342:SF0">
    <property type="entry name" value="N-ACETYLGLUTAMATE SYNTHASE, MITOCHONDRIAL"/>
    <property type="match status" value="1"/>
</dbReference>
<dbReference type="Pfam" id="PF00696">
    <property type="entry name" value="AA_kinase"/>
    <property type="match status" value="1"/>
</dbReference>
<dbReference type="PIRSF" id="PIRSF000728">
    <property type="entry name" value="NAGK"/>
    <property type="match status" value="1"/>
</dbReference>
<dbReference type="SUPFAM" id="SSF53633">
    <property type="entry name" value="Carbamate kinase-like"/>
    <property type="match status" value="1"/>
</dbReference>
<evidence type="ECO:0000255" key="1">
    <source>
        <dbReference type="HAMAP-Rule" id="MF_02082"/>
    </source>
</evidence>
<gene>
    <name evidence="1" type="primary">lysZ</name>
    <name type="ordered locus">Tneu_1836</name>
</gene>
<feature type="chain" id="PRO_1000092889" description="Putative [LysW]-aminoadipate/[LysW]-glutamate kinase">
    <location>
        <begin position="1"/>
        <end position="260"/>
    </location>
</feature>
<feature type="binding site" evidence="1">
    <location>
        <begin position="35"/>
        <end position="36"/>
    </location>
    <ligand>
        <name>substrate</name>
    </ligand>
</feature>
<feature type="binding site" evidence="1">
    <location>
        <position position="62"/>
    </location>
    <ligand>
        <name>substrate</name>
    </ligand>
</feature>
<feature type="binding site" evidence="1">
    <location>
        <position position="162"/>
    </location>
    <ligand>
        <name>substrate</name>
    </ligand>
</feature>
<feature type="site" description="Transition state stabilizer" evidence="1">
    <location>
        <position position="5"/>
    </location>
</feature>
<feature type="site" description="Transition state stabilizer" evidence="1">
    <location>
        <position position="221"/>
    </location>
</feature>
<organism>
    <name type="scientific">Pyrobaculum neutrophilum (strain DSM 2338 / JCM 9278 / NBRC 100436 / V24Sta)</name>
    <name type="common">Thermoproteus neutrophilus</name>
    <dbReference type="NCBI Taxonomy" id="444157"/>
    <lineage>
        <taxon>Archaea</taxon>
        <taxon>Thermoproteota</taxon>
        <taxon>Thermoprotei</taxon>
        <taxon>Thermoproteales</taxon>
        <taxon>Thermoproteaceae</taxon>
        <taxon>Pyrobaculum</taxon>
    </lineage>
</organism>
<reference key="1">
    <citation type="submission" date="2008-03" db="EMBL/GenBank/DDBJ databases">
        <title>Complete sequence of Thermoproteus neutrophilus V24Sta.</title>
        <authorList>
            <consortium name="US DOE Joint Genome Institute"/>
            <person name="Copeland A."/>
            <person name="Lucas S."/>
            <person name="Lapidus A."/>
            <person name="Glavina del Rio T."/>
            <person name="Dalin E."/>
            <person name="Tice H."/>
            <person name="Bruce D."/>
            <person name="Goodwin L."/>
            <person name="Pitluck S."/>
            <person name="Sims D."/>
            <person name="Brettin T."/>
            <person name="Detter J.C."/>
            <person name="Han C."/>
            <person name="Kuske C.R."/>
            <person name="Schmutz J."/>
            <person name="Larimer F."/>
            <person name="Land M."/>
            <person name="Hauser L."/>
            <person name="Kyrpides N."/>
            <person name="Mikhailova N."/>
            <person name="Biddle J.F."/>
            <person name="Zhang Z."/>
            <person name="Fitz-Gibbon S.T."/>
            <person name="Lowe T.M."/>
            <person name="Saltikov C."/>
            <person name="House C.H."/>
            <person name="Richardson P."/>
        </authorList>
    </citation>
    <scope>NUCLEOTIDE SEQUENCE [LARGE SCALE GENOMIC DNA]</scope>
    <source>
        <strain>DSM 2338 / JCM 9278 / NBRC 100436 / V24Sta</strain>
    </source>
</reference>
<comment type="function">
    <text evidence="1">Involved in both the arginine and lysine biosynthetic pathways. Phosphorylates the LysW-bound precursors glutamate (for arginine biosynthesis), respectively alpha-aminoadipate (for lysine biosynthesis).</text>
</comment>
<comment type="catalytic activity">
    <reaction evidence="1">
        <text>[amino-group carrier protein]-C-terminal-N-(1,4-dicarboxybutan-1-yl)-L-glutamine + ATP = [amino-group carrier protein]-C-terminal-N-(1-carboxy-5-phosphooxy-5-oxopentan-1-yl)-L-glutamine + ADP</text>
        <dbReference type="Rhea" id="RHEA:41944"/>
        <dbReference type="Rhea" id="RHEA-COMP:9694"/>
        <dbReference type="Rhea" id="RHEA-COMP:9712"/>
        <dbReference type="ChEBI" id="CHEBI:30616"/>
        <dbReference type="ChEBI" id="CHEBI:78499"/>
        <dbReference type="ChEBI" id="CHEBI:78503"/>
        <dbReference type="ChEBI" id="CHEBI:456216"/>
        <dbReference type="EC" id="2.7.2.17"/>
    </reaction>
</comment>
<comment type="catalytic activity">
    <reaction evidence="1">
        <text>[amino-group carrier protein]-C-terminal-gamma-(L-glutamyl)-L-glutamate + ATP = [amino-group carrier protein]-C-terminal-gamma-(5-phospho-L-glutamyl)-L-glutamate + ADP</text>
        <dbReference type="Rhea" id="RHEA:52632"/>
        <dbReference type="Rhea" id="RHEA-COMP:13311"/>
        <dbReference type="Rhea" id="RHEA-COMP:13313"/>
        <dbReference type="ChEBI" id="CHEBI:30616"/>
        <dbReference type="ChEBI" id="CHEBI:136714"/>
        <dbReference type="ChEBI" id="CHEBI:136717"/>
        <dbReference type="ChEBI" id="CHEBI:456216"/>
        <dbReference type="EC" id="2.7.2.19"/>
    </reaction>
</comment>
<comment type="pathway">
    <text evidence="1">Amino-acid biosynthesis; L-lysine biosynthesis via AAA pathway; L-lysine from L-alpha-aminoadipate (Thermus route): step 2/5.</text>
</comment>
<comment type="pathway">
    <text evidence="1">Amino-acid biosynthesis; L-arginine biosynthesis.</text>
</comment>
<comment type="subcellular location">
    <subcellularLocation>
        <location evidence="1">Cytoplasm</location>
    </subcellularLocation>
</comment>
<comment type="similarity">
    <text evidence="1">Belongs to the acetylglutamate kinase family. LysZ subfamily.</text>
</comment>
<accession>B1YB53</accession>
<sequence>MIVVKIGGSVVCKDPTKVVENLPNYADKAVVVHGGGCLVNDLLKRMGVEPKFLTHPGGLVSRYTDLETLKVFVMAMSWINKSIVASLHALGVEALGLTGADLGVVKARRKEKVLVVDERGRQRVVDGGYVGRVVDIAVDKLRPPPLKVLSPVAVSERGELLNIDGDQLAFDVAKRLGAERLVLLSDVDGLIIGGSVVPRLTAAQAEELVKNEEVRGGMKRKLLMAAEAAKLGLEVVISNGLVDKPIDAALSGRGTHVVKG</sequence>
<protein>
    <recommendedName>
        <fullName evidence="1">Putative [LysW]-aminoadipate/[LysW]-glutamate kinase</fullName>
        <ecNumber evidence="1">2.7.2.17</ecNumber>
        <ecNumber evidence="1">2.7.2.19</ecNumber>
    </recommendedName>
</protein>